<organism>
    <name type="scientific">Lycosa singoriensis</name>
    <name type="common">Wolf spider</name>
    <name type="synonym">Aranea singoriensis</name>
    <dbReference type="NCBI Taxonomy" id="434756"/>
    <lineage>
        <taxon>Eukaryota</taxon>
        <taxon>Metazoa</taxon>
        <taxon>Ecdysozoa</taxon>
        <taxon>Arthropoda</taxon>
        <taxon>Chelicerata</taxon>
        <taxon>Arachnida</taxon>
        <taxon>Araneae</taxon>
        <taxon>Araneomorphae</taxon>
        <taxon>Entelegynae</taxon>
        <taxon>Lycosoidea</taxon>
        <taxon>Lycosidae</taxon>
        <taxon>Lycosa</taxon>
    </lineage>
</organism>
<dbReference type="EMBL" id="EU926020">
    <property type="protein sequence ID" value="ACI41352.1"/>
    <property type="molecule type" value="mRNA"/>
</dbReference>
<dbReference type="EMBL" id="FM864024">
    <property type="protein sequence ID" value="CAS03622.1"/>
    <property type="molecule type" value="mRNA"/>
</dbReference>
<dbReference type="SMR" id="B6DCT6"/>
<dbReference type="ArachnoServer" id="AS000966">
    <property type="toxin name" value="U4-lycotoxin-Ls1a"/>
</dbReference>
<dbReference type="GO" id="GO:0005576">
    <property type="term" value="C:extracellular region"/>
    <property type="evidence" value="ECO:0007669"/>
    <property type="project" value="UniProtKB-SubCell"/>
</dbReference>
<dbReference type="GO" id="GO:0005246">
    <property type="term" value="F:calcium channel regulator activity"/>
    <property type="evidence" value="ECO:0007669"/>
    <property type="project" value="UniProtKB-KW"/>
</dbReference>
<dbReference type="GO" id="GO:0090729">
    <property type="term" value="F:toxin activity"/>
    <property type="evidence" value="ECO:0007669"/>
    <property type="project" value="UniProtKB-KW"/>
</dbReference>
<dbReference type="InterPro" id="IPR019553">
    <property type="entry name" value="Spider_toxin_CSTX_knottin"/>
</dbReference>
<dbReference type="InterPro" id="IPR011142">
    <property type="entry name" value="Spider_toxin_CSTX_Knottin_CS"/>
</dbReference>
<dbReference type="Pfam" id="PF10530">
    <property type="entry name" value="Toxin_35"/>
    <property type="match status" value="1"/>
</dbReference>
<dbReference type="PROSITE" id="PS60029">
    <property type="entry name" value="SPIDER_CSTX"/>
    <property type="match status" value="1"/>
</dbReference>
<feature type="signal peptide" evidence="3">
    <location>
        <begin position="1"/>
        <end position="22"/>
    </location>
</feature>
<feature type="propeptide" id="PRO_0000401685" evidence="1">
    <location>
        <begin position="23"/>
        <end position="44"/>
    </location>
</feature>
<feature type="chain" id="PRO_0000401686" description="U4-lycotoxin-Ls1a">
    <location>
        <begin position="45"/>
        <end position="109"/>
    </location>
</feature>
<feature type="region of interest" description="Knottin domain" evidence="2">
    <location>
        <begin position="45"/>
        <end position="88"/>
    </location>
</feature>
<feature type="region of interest" description="Linear cationic cytotoxin domain" evidence="2">
    <location>
        <begin position="89"/>
        <end position="108"/>
    </location>
</feature>
<feature type="disulfide bond" evidence="2">
    <location>
        <begin position="48"/>
        <end position="63"/>
    </location>
</feature>
<feature type="disulfide bond" evidence="2">
    <location>
        <begin position="55"/>
        <end position="72"/>
    </location>
</feature>
<feature type="disulfide bond" evidence="2">
    <location>
        <begin position="62"/>
        <end position="88"/>
    </location>
</feature>
<feature type="disulfide bond" evidence="2">
    <location>
        <begin position="74"/>
        <end position="86"/>
    </location>
</feature>
<proteinExistence type="inferred from homology"/>
<sequence length="109" mass="12426">MKVLVLFSVLFLTLFSYSSTEAIDEFDSDAEEDMLSLMANEQVRAKACTPRLHDCSHDRHSCCRGELFKDVCYCFYPEGEDKTEVCSCQQPKSHKYIEKVVDKAKTVVG</sequence>
<protein>
    <recommendedName>
        <fullName evidence="4">U4-lycotoxin-Ls1a</fullName>
        <shortName evidence="4">U4-LCTX-Ls1a</shortName>
    </recommendedName>
    <alternativeName>
        <fullName>Toxin-like structure LSTX-C4</fullName>
    </alternativeName>
</protein>
<reference key="1">
    <citation type="journal article" date="2010" name="Zoology">
        <title>Transcriptome analysis of the venom glands of the Chinese wolf spider Lycosa singoriensis.</title>
        <authorList>
            <person name="Zhang Y."/>
            <person name="Chen J."/>
            <person name="Tang X."/>
            <person name="Wang F."/>
            <person name="Jiang L."/>
            <person name="Xiong X."/>
            <person name="Wang M."/>
            <person name="Rong M."/>
            <person name="Liu Z."/>
            <person name="Liang S."/>
        </authorList>
    </citation>
    <scope>NUCLEOTIDE SEQUENCE [LARGE SCALE MRNA]</scope>
    <source>
        <tissue>Venom gland</tissue>
    </source>
</reference>
<keyword id="KW-0108">Calcium channel impairing toxin</keyword>
<keyword id="KW-1015">Disulfide bond</keyword>
<keyword id="KW-0872">Ion channel impairing toxin</keyword>
<keyword id="KW-0960">Knottin</keyword>
<keyword id="KW-0964">Secreted</keyword>
<keyword id="KW-0732">Signal</keyword>
<keyword id="KW-0800">Toxin</keyword>
<evidence type="ECO:0000250" key="1"/>
<evidence type="ECO:0000250" key="2">
    <source>
        <dbReference type="UniProtKB" id="B3EWH0"/>
    </source>
</evidence>
<evidence type="ECO:0000255" key="3"/>
<evidence type="ECO:0000305" key="4"/>
<evidence type="ECO:0000305" key="5">
    <source>
    </source>
</evidence>
<name>TX404_LYCSI</name>
<accession>B6DCT6</accession>
<comment type="function">
    <text evidence="2">Enhances the high-affinity desensitization of human P2RX3 purinoceptors.</text>
</comment>
<comment type="subcellular location">
    <subcellularLocation>
        <location evidence="1">Secreted</location>
    </subcellularLocation>
</comment>
<comment type="tissue specificity">
    <text evidence="5">Expressed by the venom gland.</text>
</comment>
<comment type="domain">
    <text evidence="2">The toxin is composed of 2 domains: a highly rigid N-terminal inhibitor cystine knot (knottin) domain and a rather flexible C-terminal linear cationic cytotoxin domain that forms amphiphilic alpha-helices.</text>
</comment>
<comment type="domain">
    <text evidence="2">The presence of a 'disulfide through disulfide knot' structurally defines this protein as a knottin.</text>
</comment>
<comment type="similarity">
    <text evidence="4">Belongs to the neurotoxin 19 (CSTX) family. 05 (U4-Lctx) subfamily.</text>
</comment>